<comment type="function">
    <text evidence="1">One of the primary rRNA binding proteins, it binds directly near the 3'-end of the 23S rRNA, where it nucleates assembly of the 50S subunit.</text>
</comment>
<comment type="subunit">
    <text evidence="1">Part of the 50S ribosomal subunit. Forms a cluster with proteins L14 and L19.</text>
</comment>
<comment type="PTM">
    <text evidence="1">Methylated by PrmB.</text>
</comment>
<comment type="similarity">
    <text evidence="1">Belongs to the universal ribosomal protein uL3 family.</text>
</comment>
<sequence>MAIGLVGRKCGMTRIFTDAGVSVPVTVIEVDPNRITQIKTLETDGYQAVQVTTGERRESRVTNAQKGHFAKAGVAAGRLVKEFRVTEAELEGREIGGTIGVDLFTVGQVVDVTGQSKGKGFQGGVKRWNFRTQDATHGNSVSHRVLGSTGQNQTPGRVFKGKKMAGHLGDERVTVQGLEIVSIDAERSVLVVKGAIPGATGGDVIVRPTIKA</sequence>
<proteinExistence type="inferred from homology"/>
<gene>
    <name evidence="1" type="primary">rplC</name>
    <name type="ordered locus">ACIAD3219</name>
</gene>
<name>RL3_ACIAD</name>
<protein>
    <recommendedName>
        <fullName evidence="1">Large ribosomal subunit protein uL3</fullName>
    </recommendedName>
    <alternativeName>
        <fullName evidence="2">50S ribosomal protein L3</fullName>
    </alternativeName>
</protein>
<reference key="1">
    <citation type="journal article" date="2004" name="Nucleic Acids Res.">
        <title>Unique features revealed by the genome sequence of Acinetobacter sp. ADP1, a versatile and naturally transformation competent bacterium.</title>
        <authorList>
            <person name="Barbe V."/>
            <person name="Vallenet D."/>
            <person name="Fonknechten N."/>
            <person name="Kreimeyer A."/>
            <person name="Oztas S."/>
            <person name="Labarre L."/>
            <person name="Cruveiller S."/>
            <person name="Robert C."/>
            <person name="Duprat S."/>
            <person name="Wincker P."/>
            <person name="Ornston L.N."/>
            <person name="Weissenbach J."/>
            <person name="Marliere P."/>
            <person name="Cohen G.N."/>
            <person name="Medigue C."/>
        </authorList>
    </citation>
    <scope>NUCLEOTIDE SEQUENCE [LARGE SCALE GENOMIC DNA]</scope>
    <source>
        <strain>ATCC 33305 / BD413 / ADP1</strain>
    </source>
</reference>
<evidence type="ECO:0000255" key="1">
    <source>
        <dbReference type="HAMAP-Rule" id="MF_01325"/>
    </source>
</evidence>
<evidence type="ECO:0000305" key="2"/>
<organism>
    <name type="scientific">Acinetobacter baylyi (strain ATCC 33305 / BD413 / ADP1)</name>
    <dbReference type="NCBI Taxonomy" id="62977"/>
    <lineage>
        <taxon>Bacteria</taxon>
        <taxon>Pseudomonadati</taxon>
        <taxon>Pseudomonadota</taxon>
        <taxon>Gammaproteobacteria</taxon>
        <taxon>Moraxellales</taxon>
        <taxon>Moraxellaceae</taxon>
        <taxon>Acinetobacter</taxon>
    </lineage>
</organism>
<dbReference type="EMBL" id="CR543861">
    <property type="protein sequence ID" value="CAG69903.1"/>
    <property type="molecule type" value="Genomic_DNA"/>
</dbReference>
<dbReference type="RefSeq" id="WP_004924098.1">
    <property type="nucleotide sequence ID" value="NC_005966.1"/>
</dbReference>
<dbReference type="SMR" id="Q6F7R2"/>
<dbReference type="STRING" id="202950.GCA_001485005_02936"/>
<dbReference type="GeneID" id="45235434"/>
<dbReference type="KEGG" id="aci:ACIAD3219"/>
<dbReference type="eggNOG" id="COG0087">
    <property type="taxonomic scope" value="Bacteria"/>
</dbReference>
<dbReference type="HOGENOM" id="CLU_044142_4_1_6"/>
<dbReference type="OrthoDB" id="9806135at2"/>
<dbReference type="BioCyc" id="ASP62977:ACIAD_RS14595-MONOMER"/>
<dbReference type="Proteomes" id="UP000000430">
    <property type="component" value="Chromosome"/>
</dbReference>
<dbReference type="GO" id="GO:0022625">
    <property type="term" value="C:cytosolic large ribosomal subunit"/>
    <property type="evidence" value="ECO:0007669"/>
    <property type="project" value="TreeGrafter"/>
</dbReference>
<dbReference type="GO" id="GO:0019843">
    <property type="term" value="F:rRNA binding"/>
    <property type="evidence" value="ECO:0007669"/>
    <property type="project" value="UniProtKB-UniRule"/>
</dbReference>
<dbReference type="GO" id="GO:0003735">
    <property type="term" value="F:structural constituent of ribosome"/>
    <property type="evidence" value="ECO:0007669"/>
    <property type="project" value="InterPro"/>
</dbReference>
<dbReference type="GO" id="GO:0006412">
    <property type="term" value="P:translation"/>
    <property type="evidence" value="ECO:0007669"/>
    <property type="project" value="UniProtKB-UniRule"/>
</dbReference>
<dbReference type="FunFam" id="2.40.30.10:FF:000004">
    <property type="entry name" value="50S ribosomal protein L3"/>
    <property type="match status" value="1"/>
</dbReference>
<dbReference type="FunFam" id="3.30.160.810:FF:000001">
    <property type="entry name" value="50S ribosomal protein L3"/>
    <property type="match status" value="1"/>
</dbReference>
<dbReference type="Gene3D" id="3.30.160.810">
    <property type="match status" value="1"/>
</dbReference>
<dbReference type="Gene3D" id="2.40.30.10">
    <property type="entry name" value="Translation factors"/>
    <property type="match status" value="1"/>
</dbReference>
<dbReference type="HAMAP" id="MF_01325_B">
    <property type="entry name" value="Ribosomal_uL3_B"/>
    <property type="match status" value="1"/>
</dbReference>
<dbReference type="InterPro" id="IPR000597">
    <property type="entry name" value="Ribosomal_uL3"/>
</dbReference>
<dbReference type="InterPro" id="IPR019927">
    <property type="entry name" value="Ribosomal_uL3_bac/org-type"/>
</dbReference>
<dbReference type="InterPro" id="IPR019926">
    <property type="entry name" value="Ribosomal_uL3_CS"/>
</dbReference>
<dbReference type="InterPro" id="IPR009000">
    <property type="entry name" value="Transl_B-barrel_sf"/>
</dbReference>
<dbReference type="NCBIfam" id="TIGR03625">
    <property type="entry name" value="L3_bact"/>
    <property type="match status" value="1"/>
</dbReference>
<dbReference type="PANTHER" id="PTHR11229">
    <property type="entry name" value="50S RIBOSOMAL PROTEIN L3"/>
    <property type="match status" value="1"/>
</dbReference>
<dbReference type="PANTHER" id="PTHR11229:SF16">
    <property type="entry name" value="LARGE RIBOSOMAL SUBUNIT PROTEIN UL3C"/>
    <property type="match status" value="1"/>
</dbReference>
<dbReference type="Pfam" id="PF00297">
    <property type="entry name" value="Ribosomal_L3"/>
    <property type="match status" value="1"/>
</dbReference>
<dbReference type="SUPFAM" id="SSF50447">
    <property type="entry name" value="Translation proteins"/>
    <property type="match status" value="1"/>
</dbReference>
<dbReference type="PROSITE" id="PS00474">
    <property type="entry name" value="RIBOSOMAL_L3"/>
    <property type="match status" value="1"/>
</dbReference>
<keyword id="KW-0488">Methylation</keyword>
<keyword id="KW-0687">Ribonucleoprotein</keyword>
<keyword id="KW-0689">Ribosomal protein</keyword>
<keyword id="KW-0694">RNA-binding</keyword>
<keyword id="KW-0699">rRNA-binding</keyword>
<feature type="chain" id="PRO_0000241305" description="Large ribosomal subunit protein uL3">
    <location>
        <begin position="1"/>
        <end position="212"/>
    </location>
</feature>
<feature type="modified residue" description="N5-methylglutamine" evidence="1">
    <location>
        <position position="153"/>
    </location>
</feature>
<accession>Q6F7R2</accession>